<comment type="function">
    <text evidence="1">The RuvA-RuvB-RuvC complex processes Holliday junction (HJ) DNA during genetic recombination and DNA repair, while the RuvA-RuvB complex plays an important role in the rescue of blocked DNA replication forks via replication fork reversal (RFR). RuvA specifically binds to HJ cruciform DNA, conferring on it an open structure. The RuvB hexamer acts as an ATP-dependent pump, pulling dsDNA into and through the RuvAB complex. HJ branch migration allows RuvC to scan DNA until it finds its consensus sequence, where it cleaves and resolves the cruciform DNA.</text>
</comment>
<comment type="subunit">
    <text evidence="1">Homotetramer. Forms an RuvA(8)-RuvB(12)-Holliday junction (HJ) complex. HJ DNA is sandwiched between 2 RuvA tetramers; dsDNA enters through RuvA and exits via RuvB. An RuvB hexamer assembles on each DNA strand where it exits the tetramer. Each RuvB hexamer is contacted by two RuvA subunits (via domain III) on 2 adjacent RuvB subunits; this complex drives branch migration. In the full resolvosome a probable DNA-RuvA(4)-RuvB(12)-RuvC(2) complex forms which resolves the HJ.</text>
</comment>
<comment type="subcellular location">
    <subcellularLocation>
        <location evidence="1">Cytoplasm</location>
    </subcellularLocation>
</comment>
<comment type="domain">
    <text evidence="1">Has three domains with a flexible linker between the domains II and III and assumes an 'L' shape. Domain III is highly mobile and contacts RuvB.</text>
</comment>
<comment type="similarity">
    <text evidence="1">Belongs to the RuvA family.</text>
</comment>
<evidence type="ECO:0000255" key="1">
    <source>
        <dbReference type="HAMAP-Rule" id="MF_00031"/>
    </source>
</evidence>
<keyword id="KW-0963">Cytoplasm</keyword>
<keyword id="KW-0227">DNA damage</keyword>
<keyword id="KW-0233">DNA recombination</keyword>
<keyword id="KW-0234">DNA repair</keyword>
<keyword id="KW-0238">DNA-binding</keyword>
<dbReference type="EMBL" id="BX548174">
    <property type="protein sequence ID" value="CAE19401.1"/>
    <property type="molecule type" value="Genomic_DNA"/>
</dbReference>
<dbReference type="RefSeq" id="WP_011132575.1">
    <property type="nucleotide sequence ID" value="NC_005072.1"/>
</dbReference>
<dbReference type="SMR" id="Q7V1D3"/>
<dbReference type="STRING" id="59919.PMM0942"/>
<dbReference type="KEGG" id="pmm:PMM0942"/>
<dbReference type="eggNOG" id="COG0632">
    <property type="taxonomic scope" value="Bacteria"/>
</dbReference>
<dbReference type="HOGENOM" id="CLU_087936_0_0_3"/>
<dbReference type="OrthoDB" id="5293449at2"/>
<dbReference type="Proteomes" id="UP000001026">
    <property type="component" value="Chromosome"/>
</dbReference>
<dbReference type="GO" id="GO:0005737">
    <property type="term" value="C:cytoplasm"/>
    <property type="evidence" value="ECO:0007669"/>
    <property type="project" value="UniProtKB-SubCell"/>
</dbReference>
<dbReference type="GO" id="GO:0048476">
    <property type="term" value="C:Holliday junction resolvase complex"/>
    <property type="evidence" value="ECO:0007669"/>
    <property type="project" value="UniProtKB-UniRule"/>
</dbReference>
<dbReference type="GO" id="GO:0005524">
    <property type="term" value="F:ATP binding"/>
    <property type="evidence" value="ECO:0007669"/>
    <property type="project" value="InterPro"/>
</dbReference>
<dbReference type="GO" id="GO:0000400">
    <property type="term" value="F:four-way junction DNA binding"/>
    <property type="evidence" value="ECO:0007669"/>
    <property type="project" value="UniProtKB-UniRule"/>
</dbReference>
<dbReference type="GO" id="GO:0009378">
    <property type="term" value="F:four-way junction helicase activity"/>
    <property type="evidence" value="ECO:0007669"/>
    <property type="project" value="InterPro"/>
</dbReference>
<dbReference type="GO" id="GO:0006310">
    <property type="term" value="P:DNA recombination"/>
    <property type="evidence" value="ECO:0007669"/>
    <property type="project" value="UniProtKB-UniRule"/>
</dbReference>
<dbReference type="GO" id="GO:0006281">
    <property type="term" value="P:DNA repair"/>
    <property type="evidence" value="ECO:0007669"/>
    <property type="project" value="UniProtKB-UniRule"/>
</dbReference>
<dbReference type="Gene3D" id="1.10.150.20">
    <property type="entry name" value="5' to 3' exonuclease, C-terminal subdomain"/>
    <property type="match status" value="1"/>
</dbReference>
<dbReference type="Gene3D" id="2.40.50.140">
    <property type="entry name" value="Nucleic acid-binding proteins"/>
    <property type="match status" value="1"/>
</dbReference>
<dbReference type="HAMAP" id="MF_00031">
    <property type="entry name" value="DNA_HJ_migration_RuvA"/>
    <property type="match status" value="1"/>
</dbReference>
<dbReference type="InterPro" id="IPR013849">
    <property type="entry name" value="DNA_helicase_Holl-junc_RuvA_I"/>
</dbReference>
<dbReference type="InterPro" id="IPR012340">
    <property type="entry name" value="NA-bd_OB-fold"/>
</dbReference>
<dbReference type="InterPro" id="IPR000085">
    <property type="entry name" value="RuvA"/>
</dbReference>
<dbReference type="InterPro" id="IPR010994">
    <property type="entry name" value="RuvA_2-like"/>
</dbReference>
<dbReference type="NCBIfam" id="TIGR00084">
    <property type="entry name" value="ruvA"/>
    <property type="match status" value="1"/>
</dbReference>
<dbReference type="Pfam" id="PF14520">
    <property type="entry name" value="HHH_5"/>
    <property type="match status" value="1"/>
</dbReference>
<dbReference type="Pfam" id="PF01330">
    <property type="entry name" value="RuvA_N"/>
    <property type="match status" value="1"/>
</dbReference>
<dbReference type="SUPFAM" id="SSF50249">
    <property type="entry name" value="Nucleic acid-binding proteins"/>
    <property type="match status" value="1"/>
</dbReference>
<dbReference type="SUPFAM" id="SSF47781">
    <property type="entry name" value="RuvA domain 2-like"/>
    <property type="match status" value="1"/>
</dbReference>
<feature type="chain" id="PRO_0000094664" description="Holliday junction branch migration complex subunit RuvA">
    <location>
        <begin position="1"/>
        <end position="219"/>
    </location>
</feature>
<feature type="region of interest" description="Domain I" evidence="1">
    <location>
        <begin position="1"/>
        <end position="71"/>
    </location>
</feature>
<feature type="region of interest" description="Domain II" evidence="1">
    <location>
        <begin position="72"/>
        <end position="150"/>
    </location>
</feature>
<feature type="region of interest" description="Flexible linker" evidence="1">
    <location>
        <begin position="151"/>
        <end position="161"/>
    </location>
</feature>
<feature type="region of interest" description="Domain III" evidence="1">
    <location>
        <begin position="161"/>
        <end position="219"/>
    </location>
</feature>
<gene>
    <name evidence="1" type="primary">ruvA</name>
    <name type="ordered locus">PMM0942</name>
</gene>
<name>RUVA_PROMP</name>
<organism>
    <name type="scientific">Prochlorococcus marinus subsp. pastoris (strain CCMP1986 / NIES-2087 / MED4)</name>
    <dbReference type="NCBI Taxonomy" id="59919"/>
    <lineage>
        <taxon>Bacteria</taxon>
        <taxon>Bacillati</taxon>
        <taxon>Cyanobacteriota</taxon>
        <taxon>Cyanophyceae</taxon>
        <taxon>Synechococcales</taxon>
        <taxon>Prochlorococcaceae</taxon>
        <taxon>Prochlorococcus</taxon>
    </lineage>
</organism>
<protein>
    <recommendedName>
        <fullName evidence="1">Holliday junction branch migration complex subunit RuvA</fullName>
    </recommendedName>
</protein>
<accession>Q7V1D3</accession>
<reference key="1">
    <citation type="journal article" date="2003" name="Nature">
        <title>Genome divergence in two Prochlorococcus ecotypes reflects oceanic niche differentiation.</title>
        <authorList>
            <person name="Rocap G."/>
            <person name="Larimer F.W."/>
            <person name="Lamerdin J.E."/>
            <person name="Malfatti S."/>
            <person name="Chain P."/>
            <person name="Ahlgren N.A."/>
            <person name="Arellano A."/>
            <person name="Coleman M."/>
            <person name="Hauser L."/>
            <person name="Hess W.R."/>
            <person name="Johnson Z.I."/>
            <person name="Land M.L."/>
            <person name="Lindell D."/>
            <person name="Post A.F."/>
            <person name="Regala W."/>
            <person name="Shah M."/>
            <person name="Shaw S.L."/>
            <person name="Steglich C."/>
            <person name="Sullivan M.B."/>
            <person name="Ting C.S."/>
            <person name="Tolonen A."/>
            <person name="Webb E.A."/>
            <person name="Zinser E.R."/>
            <person name="Chisholm S.W."/>
        </authorList>
    </citation>
    <scope>NUCLEOTIDE SEQUENCE [LARGE SCALE GENOMIC DNA]</scope>
    <source>
        <strain>CCMP1986 / NIES-2087 / MED4</strain>
    </source>
</reference>
<sequence>MISWIKGELVSSWQANNKFYILVNCQGLGYEIQTLESVFFDINSNKISEKEIILWLKHIKKEDSDMLFGFSTKDQRDFFIQILNIKGIGSQIGMSLLNKFSLNQLITAISNNDKKSISTVQGIGQKMTERIILELKSKVINKEIEKENLNINNFLEKNKDLDSIFKDIDLTLQSLNYSKKEIKNLFPKLINNIKNSSLEKESISFENLLKEAMNYLDHK</sequence>
<proteinExistence type="inferred from homology"/>